<proteinExistence type="inferred from homology"/>
<accession>A9L122</accession>
<reference key="1">
    <citation type="submission" date="2007-11" db="EMBL/GenBank/DDBJ databases">
        <title>Complete sequence of chromosome of Shewanella baltica OS195.</title>
        <authorList>
            <consortium name="US DOE Joint Genome Institute"/>
            <person name="Copeland A."/>
            <person name="Lucas S."/>
            <person name="Lapidus A."/>
            <person name="Barry K."/>
            <person name="Glavina del Rio T."/>
            <person name="Dalin E."/>
            <person name="Tice H."/>
            <person name="Pitluck S."/>
            <person name="Chain P."/>
            <person name="Malfatti S."/>
            <person name="Shin M."/>
            <person name="Vergez L."/>
            <person name="Schmutz J."/>
            <person name="Larimer F."/>
            <person name="Land M."/>
            <person name="Hauser L."/>
            <person name="Kyrpides N."/>
            <person name="Kim E."/>
            <person name="Brettar I."/>
            <person name="Rodrigues J."/>
            <person name="Konstantinidis K."/>
            <person name="Klappenbach J."/>
            <person name="Hofle M."/>
            <person name="Tiedje J."/>
            <person name="Richardson P."/>
        </authorList>
    </citation>
    <scope>NUCLEOTIDE SEQUENCE [LARGE SCALE GENOMIC DNA]</scope>
    <source>
        <strain>OS195</strain>
    </source>
</reference>
<comment type="function">
    <text evidence="1">Binds as a heterodimer with protein bS6 to the central domain of the 16S rRNA, where it helps stabilize the platform of the 30S subunit.</text>
</comment>
<comment type="subunit">
    <text evidence="1">Part of the 30S ribosomal subunit. Forms a tight heterodimer with protein bS6.</text>
</comment>
<comment type="similarity">
    <text evidence="1">Belongs to the bacterial ribosomal protein bS18 family.</text>
</comment>
<feature type="chain" id="PRO_1000078712" description="Small ribosomal subunit protein bS18">
    <location>
        <begin position="1"/>
        <end position="75"/>
    </location>
</feature>
<gene>
    <name evidence="1" type="primary">rpsR</name>
    <name type="ordered locus">Sbal195_0743</name>
</gene>
<protein>
    <recommendedName>
        <fullName evidence="1">Small ribosomal subunit protein bS18</fullName>
    </recommendedName>
    <alternativeName>
        <fullName evidence="2">30S ribosomal protein S18</fullName>
    </alternativeName>
</protein>
<keyword id="KW-0687">Ribonucleoprotein</keyword>
<keyword id="KW-0689">Ribosomal protein</keyword>
<keyword id="KW-0694">RNA-binding</keyword>
<keyword id="KW-0699">rRNA-binding</keyword>
<name>RS18_SHEB9</name>
<sequence>MARYFRRRKFCRFTAEGVAEIDYKDIVTLKNYITESGKIVPSRITGTSAKYQRQLARAIKRARYLSLLPYTDLHQ</sequence>
<dbReference type="EMBL" id="CP000891">
    <property type="protein sequence ID" value="ABX47921.1"/>
    <property type="molecule type" value="Genomic_DNA"/>
</dbReference>
<dbReference type="RefSeq" id="WP_006083042.1">
    <property type="nucleotide sequence ID" value="NC_009997.1"/>
</dbReference>
<dbReference type="SMR" id="A9L122"/>
<dbReference type="GeneID" id="94726693"/>
<dbReference type="KEGG" id="sbn:Sbal195_0743"/>
<dbReference type="HOGENOM" id="CLU_148710_2_3_6"/>
<dbReference type="Proteomes" id="UP000000770">
    <property type="component" value="Chromosome"/>
</dbReference>
<dbReference type="GO" id="GO:0022627">
    <property type="term" value="C:cytosolic small ribosomal subunit"/>
    <property type="evidence" value="ECO:0007669"/>
    <property type="project" value="TreeGrafter"/>
</dbReference>
<dbReference type="GO" id="GO:0070181">
    <property type="term" value="F:small ribosomal subunit rRNA binding"/>
    <property type="evidence" value="ECO:0007669"/>
    <property type="project" value="TreeGrafter"/>
</dbReference>
<dbReference type="GO" id="GO:0003735">
    <property type="term" value="F:structural constituent of ribosome"/>
    <property type="evidence" value="ECO:0007669"/>
    <property type="project" value="InterPro"/>
</dbReference>
<dbReference type="GO" id="GO:0006412">
    <property type="term" value="P:translation"/>
    <property type="evidence" value="ECO:0007669"/>
    <property type="project" value="UniProtKB-UniRule"/>
</dbReference>
<dbReference type="FunFam" id="4.10.640.10:FF:000001">
    <property type="entry name" value="30S ribosomal protein S18"/>
    <property type="match status" value="1"/>
</dbReference>
<dbReference type="Gene3D" id="4.10.640.10">
    <property type="entry name" value="Ribosomal protein S18"/>
    <property type="match status" value="1"/>
</dbReference>
<dbReference type="HAMAP" id="MF_00270">
    <property type="entry name" value="Ribosomal_bS18"/>
    <property type="match status" value="1"/>
</dbReference>
<dbReference type="InterPro" id="IPR001648">
    <property type="entry name" value="Ribosomal_bS18"/>
</dbReference>
<dbReference type="InterPro" id="IPR018275">
    <property type="entry name" value="Ribosomal_bS18_CS"/>
</dbReference>
<dbReference type="InterPro" id="IPR036870">
    <property type="entry name" value="Ribosomal_bS18_sf"/>
</dbReference>
<dbReference type="NCBIfam" id="TIGR00165">
    <property type="entry name" value="S18"/>
    <property type="match status" value="1"/>
</dbReference>
<dbReference type="PANTHER" id="PTHR13479">
    <property type="entry name" value="30S RIBOSOMAL PROTEIN S18"/>
    <property type="match status" value="1"/>
</dbReference>
<dbReference type="PANTHER" id="PTHR13479:SF40">
    <property type="entry name" value="SMALL RIBOSOMAL SUBUNIT PROTEIN BS18M"/>
    <property type="match status" value="1"/>
</dbReference>
<dbReference type="Pfam" id="PF01084">
    <property type="entry name" value="Ribosomal_S18"/>
    <property type="match status" value="1"/>
</dbReference>
<dbReference type="PRINTS" id="PR00974">
    <property type="entry name" value="RIBOSOMALS18"/>
</dbReference>
<dbReference type="SUPFAM" id="SSF46911">
    <property type="entry name" value="Ribosomal protein S18"/>
    <property type="match status" value="1"/>
</dbReference>
<dbReference type="PROSITE" id="PS00057">
    <property type="entry name" value="RIBOSOMAL_S18"/>
    <property type="match status" value="1"/>
</dbReference>
<organism>
    <name type="scientific">Shewanella baltica (strain OS195)</name>
    <dbReference type="NCBI Taxonomy" id="399599"/>
    <lineage>
        <taxon>Bacteria</taxon>
        <taxon>Pseudomonadati</taxon>
        <taxon>Pseudomonadota</taxon>
        <taxon>Gammaproteobacteria</taxon>
        <taxon>Alteromonadales</taxon>
        <taxon>Shewanellaceae</taxon>
        <taxon>Shewanella</taxon>
    </lineage>
</organism>
<evidence type="ECO:0000255" key="1">
    <source>
        <dbReference type="HAMAP-Rule" id="MF_00270"/>
    </source>
</evidence>
<evidence type="ECO:0000305" key="2"/>